<comment type="function">
    <text evidence="2">Functions as a negative regulator of salt stress response. Functions as a repressor of WRKY8 transcription factor by decreasing the DNA-binding activity of WRKY8 and acts antagonistically with WRKY8 to regulate sodium and potassium homeostasis under salt stress.</text>
</comment>
<comment type="subunit">
    <text evidence="2">Interacts (via N-terminus) with WRKY8.</text>
</comment>
<comment type="subcellular location">
    <subcellularLocation>
        <location evidence="2">Nucleus</location>
    </subcellularLocation>
</comment>
<comment type="tissue specificity">
    <text evidence="2">Highly expressed in roots and at lower levels in rosette leaves, cauline leaves, stems, flowers and siliques.</text>
</comment>
<comment type="induction">
    <text evidence="2">By salt stress.</text>
</comment>
<comment type="disruption phenotype">
    <text evidence="2">No visible phenotype under normal growth conditions, but mutant plants show enhanced resistance to salt stress.</text>
</comment>
<protein>
    <recommendedName>
        <fullName evidence="3">VQ motif-containing protein 9</fullName>
        <shortName evidence="3">AtVQ9</shortName>
    </recommendedName>
</protein>
<reference key="1">
    <citation type="journal article" date="2000" name="Nature">
        <title>Sequence and analysis of chromosome 1 of the plant Arabidopsis thaliana.</title>
        <authorList>
            <person name="Theologis A."/>
            <person name="Ecker J.R."/>
            <person name="Palm C.J."/>
            <person name="Federspiel N.A."/>
            <person name="Kaul S."/>
            <person name="White O."/>
            <person name="Alonso J."/>
            <person name="Altafi H."/>
            <person name="Araujo R."/>
            <person name="Bowman C.L."/>
            <person name="Brooks S.Y."/>
            <person name="Buehler E."/>
            <person name="Chan A."/>
            <person name="Chao Q."/>
            <person name="Chen H."/>
            <person name="Cheuk R.F."/>
            <person name="Chin C.W."/>
            <person name="Chung M.K."/>
            <person name="Conn L."/>
            <person name="Conway A.B."/>
            <person name="Conway A.R."/>
            <person name="Creasy T.H."/>
            <person name="Dewar K."/>
            <person name="Dunn P."/>
            <person name="Etgu P."/>
            <person name="Feldblyum T.V."/>
            <person name="Feng J.-D."/>
            <person name="Fong B."/>
            <person name="Fujii C.Y."/>
            <person name="Gill J.E."/>
            <person name="Goldsmith A.D."/>
            <person name="Haas B."/>
            <person name="Hansen N.F."/>
            <person name="Hughes B."/>
            <person name="Huizar L."/>
            <person name="Hunter J.L."/>
            <person name="Jenkins J."/>
            <person name="Johnson-Hopson C."/>
            <person name="Khan S."/>
            <person name="Khaykin E."/>
            <person name="Kim C.J."/>
            <person name="Koo H.L."/>
            <person name="Kremenetskaia I."/>
            <person name="Kurtz D.B."/>
            <person name="Kwan A."/>
            <person name="Lam B."/>
            <person name="Langin-Hooper S."/>
            <person name="Lee A."/>
            <person name="Lee J.M."/>
            <person name="Lenz C.A."/>
            <person name="Li J.H."/>
            <person name="Li Y.-P."/>
            <person name="Lin X."/>
            <person name="Liu S.X."/>
            <person name="Liu Z.A."/>
            <person name="Luros J.S."/>
            <person name="Maiti R."/>
            <person name="Marziali A."/>
            <person name="Militscher J."/>
            <person name="Miranda M."/>
            <person name="Nguyen M."/>
            <person name="Nierman W.C."/>
            <person name="Osborne B.I."/>
            <person name="Pai G."/>
            <person name="Peterson J."/>
            <person name="Pham P.K."/>
            <person name="Rizzo M."/>
            <person name="Rooney T."/>
            <person name="Rowley D."/>
            <person name="Sakano H."/>
            <person name="Salzberg S.L."/>
            <person name="Schwartz J.R."/>
            <person name="Shinn P."/>
            <person name="Southwick A.M."/>
            <person name="Sun H."/>
            <person name="Tallon L.J."/>
            <person name="Tambunga G."/>
            <person name="Toriumi M.J."/>
            <person name="Town C.D."/>
            <person name="Utterback T."/>
            <person name="Van Aken S."/>
            <person name="Vaysberg M."/>
            <person name="Vysotskaia V.S."/>
            <person name="Walker M."/>
            <person name="Wu D."/>
            <person name="Yu G."/>
            <person name="Fraser C.M."/>
            <person name="Venter J.C."/>
            <person name="Davis R.W."/>
        </authorList>
    </citation>
    <scope>NUCLEOTIDE SEQUENCE [LARGE SCALE GENOMIC DNA]</scope>
    <source>
        <strain>cv. Columbia</strain>
    </source>
</reference>
<reference key="2">
    <citation type="journal article" date="2017" name="Plant J.">
        <title>Araport11: a complete reannotation of the Arabidopsis thaliana reference genome.</title>
        <authorList>
            <person name="Cheng C.Y."/>
            <person name="Krishnakumar V."/>
            <person name="Chan A.P."/>
            <person name="Thibaud-Nissen F."/>
            <person name="Schobel S."/>
            <person name="Town C.D."/>
        </authorList>
    </citation>
    <scope>GENOME REANNOTATION</scope>
    <source>
        <strain>cv. Columbia</strain>
    </source>
</reference>
<reference key="3">
    <citation type="journal article" date="2003" name="Science">
        <title>Empirical analysis of transcriptional activity in the Arabidopsis genome.</title>
        <authorList>
            <person name="Yamada K."/>
            <person name="Lim J."/>
            <person name="Dale J.M."/>
            <person name="Chen H."/>
            <person name="Shinn P."/>
            <person name="Palm C.J."/>
            <person name="Southwick A.M."/>
            <person name="Wu H.C."/>
            <person name="Kim C.J."/>
            <person name="Nguyen M."/>
            <person name="Pham P.K."/>
            <person name="Cheuk R.F."/>
            <person name="Karlin-Newmann G."/>
            <person name="Liu S.X."/>
            <person name="Lam B."/>
            <person name="Sakano H."/>
            <person name="Wu T."/>
            <person name="Yu G."/>
            <person name="Miranda M."/>
            <person name="Quach H.L."/>
            <person name="Tripp M."/>
            <person name="Chang C.H."/>
            <person name="Lee J.M."/>
            <person name="Toriumi M.J."/>
            <person name="Chan M.M."/>
            <person name="Tang C.C."/>
            <person name="Onodera C.S."/>
            <person name="Deng J.M."/>
            <person name="Akiyama K."/>
            <person name="Ansari Y."/>
            <person name="Arakawa T."/>
            <person name="Banh J."/>
            <person name="Banno F."/>
            <person name="Bowser L."/>
            <person name="Brooks S.Y."/>
            <person name="Carninci P."/>
            <person name="Chao Q."/>
            <person name="Choy N."/>
            <person name="Enju A."/>
            <person name="Goldsmith A.D."/>
            <person name="Gurjal M."/>
            <person name="Hansen N.F."/>
            <person name="Hayashizaki Y."/>
            <person name="Johnson-Hopson C."/>
            <person name="Hsuan V.W."/>
            <person name="Iida K."/>
            <person name="Karnes M."/>
            <person name="Khan S."/>
            <person name="Koesema E."/>
            <person name="Ishida J."/>
            <person name="Jiang P.X."/>
            <person name="Jones T."/>
            <person name="Kawai J."/>
            <person name="Kamiya A."/>
            <person name="Meyers C."/>
            <person name="Nakajima M."/>
            <person name="Narusaka M."/>
            <person name="Seki M."/>
            <person name="Sakurai T."/>
            <person name="Satou M."/>
            <person name="Tamse R."/>
            <person name="Vaysberg M."/>
            <person name="Wallender E.K."/>
            <person name="Wong C."/>
            <person name="Yamamura Y."/>
            <person name="Yuan S."/>
            <person name="Shinozaki K."/>
            <person name="Davis R.W."/>
            <person name="Theologis A."/>
            <person name="Ecker J.R."/>
        </authorList>
    </citation>
    <scope>NUCLEOTIDE SEQUENCE [LARGE SCALE MRNA]</scope>
    <source>
        <strain>cv. Columbia</strain>
    </source>
</reference>
<reference key="4">
    <citation type="submission" date="2002-03" db="EMBL/GenBank/DDBJ databases">
        <title>Full-length cDNA from Arabidopsis thaliana.</title>
        <authorList>
            <person name="Brover V.V."/>
            <person name="Troukhan M.E."/>
            <person name="Alexandrov N.A."/>
            <person name="Lu Y.-P."/>
            <person name="Flavell R.B."/>
            <person name="Feldmann K.A."/>
        </authorList>
    </citation>
    <scope>NUCLEOTIDE SEQUENCE [LARGE SCALE MRNA]</scope>
</reference>
<reference key="5">
    <citation type="journal article" date="2012" name="Plant Physiol.">
        <title>Structural and functional analysis of VQ motif-containing proteins in Arabidopsis as interacting proteins of WRKY transcription factors.</title>
        <authorList>
            <person name="Cheng Y."/>
            <person name="Zhou Y."/>
            <person name="Yang Y."/>
            <person name="Chi Y.J."/>
            <person name="Zhou J."/>
            <person name="Chen J.Y."/>
            <person name="Wang F."/>
            <person name="Fan B."/>
            <person name="Shi K."/>
            <person name="Zhou Y.H."/>
            <person name="Yu J.Q."/>
            <person name="Chen Z."/>
        </authorList>
    </citation>
    <scope>GENE FAMILY</scope>
    <scope>NOMENCLATURE</scope>
</reference>
<reference key="6">
    <citation type="journal article" date="2013" name="Plant J.">
        <title>Arabidopsis transcription factor WRKY8 functions antagonistically with its interacting partner VQ9 to modulate salinity stress tolerance.</title>
        <authorList>
            <person name="Hu Y."/>
            <person name="Chen L."/>
            <person name="Wang H."/>
            <person name="Zhang L."/>
            <person name="Wang F."/>
            <person name="Yu D."/>
        </authorList>
    </citation>
    <scope>FUNCTION</scope>
    <scope>INTERACTION WITH WRKY8</scope>
    <scope>SUBCELLULAR LOCATION</scope>
    <scope>TISSUE SPECIFICITY</scope>
    <scope>INDUCTION BY SALT</scope>
    <scope>MUTAGENESIS OF 93-VAL--LYS-96</scope>
    <scope>DISRUPTION PHENOTYPE</scope>
</reference>
<name>VQ9_ARATH</name>
<proteinExistence type="evidence at protein level"/>
<gene>
    <name evidence="3" type="primary">VQ9</name>
    <name evidence="5" type="ordered locus">At1g78310</name>
    <name evidence="6" type="ORF">F3F9.15</name>
</gene>
<keyword id="KW-0539">Nucleus</keyword>
<keyword id="KW-1185">Reference proteome</keyword>
<keyword id="KW-0346">Stress response</keyword>
<accession>Q9M9F0</accession>
<accession>Q8LAX9</accession>
<organism>
    <name type="scientific">Arabidopsis thaliana</name>
    <name type="common">Mouse-ear cress</name>
    <dbReference type="NCBI Taxonomy" id="3702"/>
    <lineage>
        <taxon>Eukaryota</taxon>
        <taxon>Viridiplantae</taxon>
        <taxon>Streptophyta</taxon>
        <taxon>Embryophyta</taxon>
        <taxon>Tracheophyta</taxon>
        <taxon>Spermatophyta</taxon>
        <taxon>Magnoliopsida</taxon>
        <taxon>eudicotyledons</taxon>
        <taxon>Gunneridae</taxon>
        <taxon>Pentapetalae</taxon>
        <taxon>rosids</taxon>
        <taxon>malvids</taxon>
        <taxon>Brassicales</taxon>
        <taxon>Brassicaceae</taxon>
        <taxon>Camelineae</taxon>
        <taxon>Arabidopsis</taxon>
    </lineage>
</organism>
<evidence type="ECO:0000256" key="1">
    <source>
        <dbReference type="SAM" id="MobiDB-lite"/>
    </source>
</evidence>
<evidence type="ECO:0000269" key="2">
    <source>
    </source>
</evidence>
<evidence type="ECO:0000303" key="3">
    <source>
    </source>
</evidence>
<evidence type="ECO:0000305" key="4"/>
<evidence type="ECO:0000312" key="5">
    <source>
        <dbReference type="Araport" id="AT1G78310"/>
    </source>
</evidence>
<evidence type="ECO:0000312" key="6">
    <source>
        <dbReference type="EMBL" id="AAF71801.1"/>
    </source>
</evidence>
<dbReference type="EMBL" id="AC013430">
    <property type="protein sequence ID" value="AAF71801.1"/>
    <property type="molecule type" value="Genomic_DNA"/>
</dbReference>
<dbReference type="EMBL" id="CP002684">
    <property type="protein sequence ID" value="AEE36094.1"/>
    <property type="molecule type" value="Genomic_DNA"/>
</dbReference>
<dbReference type="EMBL" id="AY065462">
    <property type="protein sequence ID" value="AAL38903.1"/>
    <property type="molecule type" value="mRNA"/>
</dbReference>
<dbReference type="EMBL" id="AY117330">
    <property type="protein sequence ID" value="AAM51405.1"/>
    <property type="molecule type" value="mRNA"/>
</dbReference>
<dbReference type="EMBL" id="AY087538">
    <property type="protein sequence ID" value="AAM65080.1"/>
    <property type="molecule type" value="mRNA"/>
</dbReference>
<dbReference type="RefSeq" id="NP_565177.1">
    <property type="nucleotide sequence ID" value="NM_106480.4"/>
</dbReference>
<dbReference type="SMR" id="Q9M9F0"/>
<dbReference type="FunCoup" id="Q9M9F0">
    <property type="interactions" value="53"/>
</dbReference>
<dbReference type="IntAct" id="Q9M9F0">
    <property type="interactions" value="2"/>
</dbReference>
<dbReference type="STRING" id="3702.Q9M9F0"/>
<dbReference type="PaxDb" id="3702-AT1G78310.1"/>
<dbReference type="ProteomicsDB" id="242647"/>
<dbReference type="EnsemblPlants" id="AT1G78310.1">
    <property type="protein sequence ID" value="AT1G78310.1"/>
    <property type="gene ID" value="AT1G78310"/>
</dbReference>
<dbReference type="GeneID" id="844166"/>
<dbReference type="Gramene" id="AT1G78310.1">
    <property type="protein sequence ID" value="AT1G78310.1"/>
    <property type="gene ID" value="AT1G78310"/>
</dbReference>
<dbReference type="KEGG" id="ath:AT1G78310"/>
<dbReference type="Araport" id="AT1G78310"/>
<dbReference type="TAIR" id="AT1G78310">
    <property type="gene designation" value="VQ9"/>
</dbReference>
<dbReference type="eggNOG" id="ENOG502QV2B">
    <property type="taxonomic scope" value="Eukaryota"/>
</dbReference>
<dbReference type="HOGENOM" id="CLU_971171_0_0_1"/>
<dbReference type="InParanoid" id="Q9M9F0"/>
<dbReference type="OMA" id="LAPRWNN"/>
<dbReference type="PhylomeDB" id="Q9M9F0"/>
<dbReference type="PRO" id="PR:Q9M9F0"/>
<dbReference type="Proteomes" id="UP000006548">
    <property type="component" value="Chromosome 1"/>
</dbReference>
<dbReference type="ExpressionAtlas" id="Q9M9F0">
    <property type="expression patterns" value="baseline and differential"/>
</dbReference>
<dbReference type="GO" id="GO:0005634">
    <property type="term" value="C:nucleus"/>
    <property type="evidence" value="ECO:0000314"/>
    <property type="project" value="UniProtKB"/>
</dbReference>
<dbReference type="GO" id="GO:0030007">
    <property type="term" value="P:intracellular potassium ion homeostasis"/>
    <property type="evidence" value="ECO:0000315"/>
    <property type="project" value="UniProtKB"/>
</dbReference>
<dbReference type="GO" id="GO:0006883">
    <property type="term" value="P:intracellular sodium ion homeostasis"/>
    <property type="evidence" value="ECO:0000315"/>
    <property type="project" value="UniProtKB"/>
</dbReference>
<dbReference type="GO" id="GO:0043433">
    <property type="term" value="P:negative regulation of DNA-binding transcription factor activity"/>
    <property type="evidence" value="ECO:0000314"/>
    <property type="project" value="UniProtKB"/>
</dbReference>
<dbReference type="GO" id="GO:1901001">
    <property type="term" value="P:negative regulation of response to salt stress"/>
    <property type="evidence" value="ECO:0000315"/>
    <property type="project" value="UniProtKB"/>
</dbReference>
<dbReference type="InterPro" id="IPR008889">
    <property type="entry name" value="VQ"/>
</dbReference>
<dbReference type="InterPro" id="IPR039612">
    <property type="entry name" value="VQ_5/9/14"/>
</dbReference>
<dbReference type="PANTHER" id="PTHR33783">
    <property type="entry name" value="PROTEIN HAIKU1"/>
    <property type="match status" value="1"/>
</dbReference>
<dbReference type="PANTHER" id="PTHR33783:SF4">
    <property type="entry name" value="VQ MOTIF-CONTAINING PROTEIN 9"/>
    <property type="match status" value="1"/>
</dbReference>
<dbReference type="Pfam" id="PF05678">
    <property type="entry name" value="VQ"/>
    <property type="match status" value="1"/>
</dbReference>
<sequence length="311" mass="33577">MDKSCNSSGDSSAVSASATSSTGNNTTNRDHYLRQLNKLSHKISKPTNSSSSVSVANREIDLPPPPPLQINQGNLHQHQPPVYNINKNDFRDVVQKLTGSPAHERISAPPQQPIHHPKPQQSSRLHRIRPPPLVHVINRPPGLLNDALIPQGSHHMNQNWTGVGFNLRPTAPLSPLPPLPPVHAAAESPVSSYMRYLQNSMFAIDSNRKEFSGLSPLAPLVSPRWYQQQENAPPSQHNSFPPPHPPPPSSAVSQTVPTSIPAPPLFGCSSSPKSPYGLLSPSILLSPSSGQLGFPVSPTTVPLPSPKYKGH</sequence>
<feature type="chain" id="PRO_0000432305" description="VQ motif-containing protein 9">
    <location>
        <begin position="1"/>
        <end position="311"/>
    </location>
</feature>
<feature type="region of interest" description="Disordered" evidence="1">
    <location>
        <begin position="1"/>
        <end position="78"/>
    </location>
</feature>
<feature type="region of interest" description="Disordered" evidence="1">
    <location>
        <begin position="103"/>
        <end position="125"/>
    </location>
</feature>
<feature type="region of interest" description="Disordered" evidence="1">
    <location>
        <begin position="228"/>
        <end position="266"/>
    </location>
</feature>
<feature type="region of interest" description="Disordered" evidence="1">
    <location>
        <begin position="290"/>
        <end position="311"/>
    </location>
</feature>
<feature type="short sequence motif" description="VQ" evidence="4">
    <location>
        <begin position="90"/>
        <end position="99"/>
    </location>
</feature>
<feature type="compositionally biased region" description="Low complexity" evidence="1">
    <location>
        <begin position="1"/>
        <end position="27"/>
    </location>
</feature>
<feature type="compositionally biased region" description="Pro residues" evidence="1">
    <location>
        <begin position="240"/>
        <end position="249"/>
    </location>
</feature>
<feature type="compositionally biased region" description="Low complexity" evidence="1">
    <location>
        <begin position="290"/>
        <end position="302"/>
    </location>
</feature>
<feature type="mutagenesis site" description="Loss of interaction with WRKY8 protein." evidence="2">
    <original>VVQK</original>
    <variation>EDLE</variation>
    <location>
        <begin position="93"/>
        <end position="96"/>
    </location>
</feature>
<feature type="sequence conflict" description="In Ref. 4; AAM65080." evidence="4" ref="4">
    <original>A</original>
    <variation>V</variation>
    <location>
        <position position="18"/>
    </location>
</feature>